<reference evidence="9" key="1">
    <citation type="journal article" date="1985" name="Antimicrob. Agents Chemother.">
        <title>Structure and mode of action of microcin 7, an antibacterial peptide produced by Escherichia coli.</title>
        <authorList>
            <person name="Garcia-Bustos J.F."/>
            <person name="Pezzi N."/>
            <person name="Mendez E."/>
        </authorList>
    </citation>
    <scope>PROTEIN SEQUENCE</scope>
    <scope>FUNCTION</scope>
</reference>
<reference evidence="11" key="2">
    <citation type="journal article" date="1994" name="Nature">
        <title>The smallest known gene.</title>
        <authorList>
            <person name="Gonzalez-Pastor J.E."/>
            <person name="San Millan J.L."/>
            <person name="Moreno F."/>
        </authorList>
    </citation>
    <scope>NUCLEOTIDE SEQUENCE [GENOMIC DNA]</scope>
</reference>
<reference evidence="9" key="3">
    <citation type="journal article" date="1995" name="FEBS Lett.">
        <title>Structure of microcin C51, a new antibiotic with a broad spectrum of activity.</title>
        <authorList>
            <person name="Metlitskaya A.Z."/>
            <person name="Katrukha G.S."/>
            <person name="Shashkov A.S."/>
            <person name="Zaitsev D.A."/>
            <person name="Egorov T.A."/>
            <person name="Khmel I.A."/>
        </authorList>
    </citation>
    <scope>PROTEIN SEQUENCE</scope>
    <scope>MASS SPECTROMETRY</scope>
    <scope>FORMYLATION AT MET-1</scope>
    <scope>PHOSPHORAMIDE AT ASN-7</scope>
</reference>
<reference evidence="10" key="4">
    <citation type="journal article" date="1995" name="J. Bacteriol.">
        <title>Structure and organization of plasmid genes required to produce the translation inhibitor microcin C7.</title>
        <authorList>
            <person name="Gonzalez-Pastor J.E."/>
            <person name="San Millan J.L."/>
            <person name="Castilla M.A."/>
            <person name="Moreno F."/>
        </authorList>
    </citation>
    <scope>NUCLEOTIDE SEQUENCE [GENOMIC DNA]</scope>
</reference>
<reference evidence="9" key="5">
    <citation type="journal article" date="2006" name="J. Biol. Chem.">
        <title>Aspartyl-tRNA synthetase is the target of peptide nucleotide antibiotic microcin C.</title>
        <authorList>
            <person name="Metlitskaya A.Z."/>
            <person name="Kazakov T."/>
            <person name="Kommer A."/>
            <person name="Pavlova O."/>
            <person name="Praetorius-Ibba M."/>
            <person name="Ibba M."/>
            <person name="Krasheninnikov I."/>
            <person name="Kolb V."/>
            <person name="Khmel I.A."/>
            <person name="Severinov K."/>
        </authorList>
    </citation>
    <scope>FUNCTION</scope>
</reference>
<reference evidence="9" key="6">
    <citation type="journal article" date="2007" name="J. Mol. Microbiol. Biotechnol.">
        <title>Structural and functional diversity of microcins, gene-encoded antibacterial peptides from enterobacteria.</title>
        <authorList>
            <person name="Duquesne S."/>
            <person name="Petit V."/>
            <person name="Peduzzi J."/>
            <person name="Rebuffat S."/>
        </authorList>
    </citation>
    <scope>REVIEW</scope>
</reference>
<reference evidence="9" key="7">
    <citation type="journal article" date="2007" name="Mol. Microbiol.">
        <title>Low-molecular-weight post-translationally modified microcins.</title>
        <authorList>
            <person name="Severinov K."/>
            <person name="Semenova E."/>
            <person name="Kazakov A."/>
            <person name="Kazakov T."/>
            <person name="Gelfand M.S."/>
        </authorList>
    </citation>
    <scope>REVIEW</scope>
</reference>
<reference evidence="9" key="8">
    <citation type="journal article" date="2008" name="J. Bacteriol.">
        <title>Escherichia coli peptidase A, B, or N can process translation inhibitor microcin C.</title>
        <authorList>
            <person name="Kazakov T."/>
            <person name="Vondenhoff G.H."/>
            <person name="Datsenko K.A."/>
            <person name="Novikova M."/>
            <person name="Metlitskaya A.Z."/>
            <person name="Wanner B.L."/>
            <person name="Severinov K."/>
        </authorList>
    </citation>
    <scope>FUNCTION</scope>
    <scope>PROTEOLYTIC PROCESSING</scope>
</reference>
<reference evidence="9" key="9">
    <citation type="journal article" date="1995" name="J. Biol. Chem.">
        <title>Chemical structure and translation inhibition studies of the antibiotic microcin C7.</title>
        <authorList>
            <person name="Guijarro J.I."/>
            <person name="Gonzalez-Pastor J.E."/>
            <person name="Baleux F."/>
            <person name="San Millan J.L."/>
            <person name="Castilla M.A."/>
            <person name="Rico M."/>
            <person name="Moreno F."/>
            <person name="Delepierre M."/>
        </authorList>
    </citation>
    <scope>STRUCTURE BY NMR</scope>
    <scope>FUNCTION</scope>
    <scope>MASS SPECTROMETRY</scope>
    <scope>FORMYLATION AT MET-1</scope>
    <scope>PHOSPHORAMIDE AT ASN-7</scope>
</reference>
<name>MCCC7_ECOLX</name>
<proteinExistence type="evidence at protein level"/>
<keyword id="KW-0002">3D-structure</keyword>
<keyword id="KW-0044">Antibiotic</keyword>
<keyword id="KW-0929">Antimicrobial</keyword>
<keyword id="KW-0903">Direct protein sequencing</keyword>
<keyword id="KW-0291">Formylation</keyword>
<keyword id="KW-0597">Phosphoprotein</keyword>
<keyword id="KW-0614">Plasmid</keyword>
<dbReference type="EMBL" id="X57583">
    <property type="protein sequence ID" value="CAA40808.1"/>
    <property type="molecule type" value="Genomic_DNA"/>
</dbReference>
<dbReference type="PIR" id="S45311">
    <property type="entry name" value="S45311"/>
</dbReference>
<dbReference type="PDB" id="3H5R">
    <property type="method" value="X-ray"/>
    <property type="resolution" value="2.10 A"/>
    <property type="chains" value="E/F/G/H=1-7"/>
</dbReference>
<dbReference type="PDB" id="3H9G">
    <property type="method" value="X-ray"/>
    <property type="resolution" value="2.20 A"/>
    <property type="chains" value="E/F/G/H=1-7"/>
</dbReference>
<dbReference type="PDB" id="3H9J">
    <property type="method" value="X-ray"/>
    <property type="resolution" value="2.30 A"/>
    <property type="chains" value="E/F/G/H=1-7"/>
</dbReference>
<dbReference type="PDB" id="3H9Q">
    <property type="method" value="X-ray"/>
    <property type="resolution" value="2.63 A"/>
    <property type="chains" value="E/F/G/H=1-7"/>
</dbReference>
<dbReference type="PDBsum" id="3H5R"/>
<dbReference type="PDBsum" id="3H9G"/>
<dbReference type="PDBsum" id="3H9J"/>
<dbReference type="PDBsum" id="3H9Q"/>
<dbReference type="SMR" id="Q47505"/>
<dbReference type="IntAct" id="Q47505">
    <property type="interactions" value="1"/>
</dbReference>
<dbReference type="MINT" id="Q47505"/>
<dbReference type="GO" id="GO:0042742">
    <property type="term" value="P:defense response to bacterium"/>
    <property type="evidence" value="ECO:0007669"/>
    <property type="project" value="UniProtKB-KW"/>
</dbReference>
<accession>Q47505</accession>
<evidence type="ECO:0000269" key="1">
    <source>
    </source>
</evidence>
<evidence type="ECO:0000269" key="2">
    <source>
    </source>
</evidence>
<evidence type="ECO:0000269" key="3">
    <source>
    </source>
</evidence>
<evidence type="ECO:0000269" key="4">
    <source>
    </source>
</evidence>
<evidence type="ECO:0000269" key="5">
    <source>
    </source>
</evidence>
<evidence type="ECO:0000269" key="6">
    <source>
    </source>
</evidence>
<evidence type="ECO:0000269" key="7">
    <source>
    </source>
</evidence>
<evidence type="ECO:0000269" key="8">
    <source>
    </source>
</evidence>
<evidence type="ECO:0000305" key="9"/>
<evidence type="ECO:0000312" key="10">
    <source>
        <dbReference type="EMBL" id="CAA40808.1"/>
    </source>
</evidence>
<evidence type="ECO:0000312" key="11">
    <source>
        <dbReference type="PIR" id="S45311"/>
    </source>
</evidence>
<evidence type="ECO:0007829" key="12">
    <source>
        <dbReference type="PDB" id="3H9G"/>
    </source>
</evidence>
<protein>
    <recommendedName>
        <fullName>Microcin C7</fullName>
        <shortName>MccC7</shortName>
    </recommendedName>
    <alternativeName>
        <fullName>Microcin C51</fullName>
        <shortName>McC</shortName>
        <shortName>MccC51</shortName>
        <shortName>Microcin C</shortName>
    </alternativeName>
</protein>
<comment type="function">
    <text evidence="1 3 4 5 6">Antibacterial peptide, active against enterobacteria including species of Klebsiella, Salmonella, Shigella, Yersinia and Proteus, and strains of E.coli. Inhibits protein translation by blocking aspartyl-tRNA synthetase function and inhibiting production of aminoacetylated tRNA-Asp.</text>
</comment>
<comment type="interaction">
    <interactant intactId="EBI-7035319">
        <id>Q47505</id>
    </interactant>
    <interactant intactId="EBI-7035293">
        <id>Q47506</id>
        <label>mccB</label>
    </interactant>
    <organismsDiffer>false</organismsDiffer>
    <experiments>8</experiments>
</comment>
<comment type="PTM">
    <text evidence="1 2 3 4">The peptide moiety allows entry into the bacterial cell, where it undergoes proteolytic cleavage to release the aspartyl adenylate analog, which is responsible for aspartyl-tRNA synthetase inhibition. Can be processed by the non-specific oligopeptidases PepA, PepB and PepN.</text>
</comment>
<comment type="mass spectrometry" mass="1177.0" error="1.0" method="Electrospray" evidence="6 7"/>
<comment type="mass spectrometry" mass="1177.5" method="Plasma desorption" evidence="6 7"/>
<sequence length="7" mass="763">MRTGNAN</sequence>
<geneLocation type="plasmid" evidence="10">
    <name>pMccC7</name>
</geneLocation>
<feature type="peptide" id="PRO_0000341532" description="Microcin C7" evidence="5 8">
    <location>
        <begin position="1"/>
        <end position="7"/>
    </location>
</feature>
<feature type="modified residue" description="N-formylmethionine" evidence="6 7">
    <location>
        <position position="1"/>
    </location>
</feature>
<feature type="modified residue" description="Aspartic acid 1-[(3-aminopropyl)(5'-adenosyl)phosphono]amide" evidence="6 7">
    <location>
        <position position="7"/>
    </location>
</feature>
<feature type="strand" evidence="12">
    <location>
        <begin position="3"/>
        <end position="5"/>
    </location>
</feature>
<organism>
    <name type="scientific">Escherichia coli</name>
    <dbReference type="NCBI Taxonomy" id="562"/>
    <lineage>
        <taxon>Bacteria</taxon>
        <taxon>Pseudomonadati</taxon>
        <taxon>Pseudomonadota</taxon>
        <taxon>Gammaproteobacteria</taxon>
        <taxon>Enterobacterales</taxon>
        <taxon>Enterobacteriaceae</taxon>
        <taxon>Escherichia</taxon>
    </lineage>
</organism>
<gene>
    <name evidence="10" type="primary">mccA</name>
</gene>